<dbReference type="EC" id="2.7.11.1" evidence="7"/>
<dbReference type="EMBL" id="AP003044">
    <property type="protein sequence ID" value="BAB19337.1"/>
    <property type="molecule type" value="Genomic_DNA"/>
</dbReference>
<dbReference type="EMBL" id="AP005813">
    <property type="protein sequence ID" value="BAD69166.1"/>
    <property type="molecule type" value="Genomic_DNA"/>
</dbReference>
<dbReference type="EMBL" id="AP008212">
    <property type="protein sequence ID" value="BAF19290.1"/>
    <property type="molecule type" value="Genomic_DNA"/>
</dbReference>
<dbReference type="EMBL" id="AP014962">
    <property type="protein sequence ID" value="BAS97218.1"/>
    <property type="molecule type" value="Genomic_DNA"/>
</dbReference>
<dbReference type="RefSeq" id="XP_015643910.1">
    <property type="nucleotide sequence ID" value="XM_015788424.1"/>
</dbReference>
<dbReference type="SMR" id="Q9FP13"/>
<dbReference type="FunCoup" id="Q9FP13">
    <property type="interactions" value="455"/>
</dbReference>
<dbReference type="STRING" id="39947.Q9FP13"/>
<dbReference type="GlyCosmos" id="Q9FP13">
    <property type="glycosylation" value="6 sites, No reported glycans"/>
</dbReference>
<dbReference type="PaxDb" id="39947-Q9FP13"/>
<dbReference type="EnsemblPlants" id="Os06t0274500-01">
    <property type="protein sequence ID" value="Os06t0274500-01"/>
    <property type="gene ID" value="Os06g0274500"/>
</dbReference>
<dbReference type="Gramene" id="Os06t0274500-01">
    <property type="protein sequence ID" value="Os06t0274500-01"/>
    <property type="gene ID" value="Os06g0274500"/>
</dbReference>
<dbReference type="KEGG" id="dosa:Os06g0274500"/>
<dbReference type="eggNOG" id="ENOG502QVM7">
    <property type="taxonomic scope" value="Eukaryota"/>
</dbReference>
<dbReference type="HOGENOM" id="CLU_000288_92_7_1"/>
<dbReference type="InParanoid" id="Q9FP13"/>
<dbReference type="OMA" id="NAEKDCY"/>
<dbReference type="OrthoDB" id="749055at2759"/>
<dbReference type="Proteomes" id="UP000000763">
    <property type="component" value="Chromosome 6"/>
</dbReference>
<dbReference type="Proteomes" id="UP000059680">
    <property type="component" value="Chromosome 6"/>
</dbReference>
<dbReference type="GO" id="GO:0005886">
    <property type="term" value="C:plasma membrane"/>
    <property type="evidence" value="ECO:0007669"/>
    <property type="project" value="UniProtKB-SubCell"/>
</dbReference>
<dbReference type="GO" id="GO:0005524">
    <property type="term" value="F:ATP binding"/>
    <property type="evidence" value="ECO:0007669"/>
    <property type="project" value="UniProtKB-KW"/>
</dbReference>
<dbReference type="GO" id="GO:0106310">
    <property type="term" value="F:protein serine kinase activity"/>
    <property type="evidence" value="ECO:0007669"/>
    <property type="project" value="RHEA"/>
</dbReference>
<dbReference type="GO" id="GO:0004674">
    <property type="term" value="F:protein serine/threonine kinase activity"/>
    <property type="evidence" value="ECO:0007669"/>
    <property type="project" value="UniProtKB-KW"/>
</dbReference>
<dbReference type="GO" id="GO:0006952">
    <property type="term" value="P:defense response"/>
    <property type="evidence" value="ECO:0007669"/>
    <property type="project" value="UniProtKB-KW"/>
</dbReference>
<dbReference type="FunFam" id="3.80.10.10:FF:000021">
    <property type="entry name" value="Putative LRR receptor-like serine/threonine-protein kinase"/>
    <property type="match status" value="1"/>
</dbReference>
<dbReference type="FunFam" id="3.30.200.20:FF:000015">
    <property type="entry name" value="Somatic embryogenesis receptor kinase 1"/>
    <property type="match status" value="1"/>
</dbReference>
<dbReference type="FunFam" id="1.10.510.10:FF:000016">
    <property type="entry name" value="Somatic embryogenesis receptor-like kinase 1"/>
    <property type="match status" value="1"/>
</dbReference>
<dbReference type="Gene3D" id="3.30.200.20">
    <property type="entry name" value="Phosphorylase Kinase, domain 1"/>
    <property type="match status" value="1"/>
</dbReference>
<dbReference type="Gene3D" id="3.80.10.10">
    <property type="entry name" value="Ribonuclease Inhibitor"/>
    <property type="match status" value="1"/>
</dbReference>
<dbReference type="Gene3D" id="1.10.510.10">
    <property type="entry name" value="Transferase(Phosphotransferase) domain 1"/>
    <property type="match status" value="1"/>
</dbReference>
<dbReference type="InterPro" id="IPR011009">
    <property type="entry name" value="Kinase-like_dom_sf"/>
</dbReference>
<dbReference type="InterPro" id="IPR032675">
    <property type="entry name" value="LRR_dom_sf"/>
</dbReference>
<dbReference type="InterPro" id="IPR013210">
    <property type="entry name" value="LRR_N_plant-typ"/>
</dbReference>
<dbReference type="InterPro" id="IPR055414">
    <property type="entry name" value="LRR_R13L4/SHOC2-like"/>
</dbReference>
<dbReference type="InterPro" id="IPR000719">
    <property type="entry name" value="Prot_kinase_dom"/>
</dbReference>
<dbReference type="InterPro" id="IPR017441">
    <property type="entry name" value="Protein_kinase_ATP_BS"/>
</dbReference>
<dbReference type="InterPro" id="IPR001245">
    <property type="entry name" value="Ser-Thr/Tyr_kinase_cat_dom"/>
</dbReference>
<dbReference type="InterPro" id="IPR008271">
    <property type="entry name" value="Ser/Thr_kinase_AS"/>
</dbReference>
<dbReference type="PANTHER" id="PTHR47988">
    <property type="entry name" value="SOMATIC EMBRYOGENESIS RECEPTOR KINASE 1"/>
    <property type="match status" value="1"/>
</dbReference>
<dbReference type="Pfam" id="PF23598">
    <property type="entry name" value="LRR_14"/>
    <property type="match status" value="1"/>
</dbReference>
<dbReference type="Pfam" id="PF08263">
    <property type="entry name" value="LRRNT_2"/>
    <property type="match status" value="1"/>
</dbReference>
<dbReference type="Pfam" id="PF07714">
    <property type="entry name" value="PK_Tyr_Ser-Thr"/>
    <property type="match status" value="1"/>
</dbReference>
<dbReference type="SMART" id="SM00220">
    <property type="entry name" value="S_TKc"/>
    <property type="match status" value="1"/>
</dbReference>
<dbReference type="SUPFAM" id="SSF52058">
    <property type="entry name" value="L domain-like"/>
    <property type="match status" value="1"/>
</dbReference>
<dbReference type="SUPFAM" id="SSF56112">
    <property type="entry name" value="Protein kinase-like (PK-like)"/>
    <property type="match status" value="1"/>
</dbReference>
<dbReference type="PROSITE" id="PS00107">
    <property type="entry name" value="PROTEIN_KINASE_ATP"/>
    <property type="match status" value="1"/>
</dbReference>
<dbReference type="PROSITE" id="PS50011">
    <property type="entry name" value="PROTEIN_KINASE_DOM"/>
    <property type="match status" value="1"/>
</dbReference>
<dbReference type="PROSITE" id="PS00108">
    <property type="entry name" value="PROTEIN_KINASE_ST"/>
    <property type="match status" value="1"/>
</dbReference>
<feature type="signal peptide" evidence="2">
    <location>
        <begin position="1"/>
        <end position="22"/>
    </location>
</feature>
<feature type="chain" id="PRO_5010510702" description="LRR receptor kinase SERL2" evidence="2">
    <location>
        <begin position="23"/>
        <end position="640"/>
    </location>
</feature>
<feature type="topological domain" description="Extracellular" evidence="7">
    <location>
        <begin position="23"/>
        <end position="241"/>
    </location>
</feature>
<feature type="transmembrane region" description="Helical" evidence="2">
    <location>
        <begin position="242"/>
        <end position="262"/>
    </location>
</feature>
<feature type="topological domain" description="Cytoplasmic" evidence="7">
    <location>
        <begin position="263"/>
        <end position="640"/>
    </location>
</feature>
<feature type="repeat" description="LRR 1" evidence="2">
    <location>
        <begin position="95"/>
        <end position="119"/>
    </location>
</feature>
<feature type="repeat" description="LRR 2" evidence="2">
    <location>
        <begin position="120"/>
        <end position="143"/>
    </location>
</feature>
<feature type="repeat" description="LRR 3" evidence="2">
    <location>
        <begin position="145"/>
        <end position="167"/>
    </location>
</feature>
<feature type="repeat" description="LRR 4" evidence="2">
    <location>
        <begin position="168"/>
        <end position="191"/>
    </location>
</feature>
<feature type="domain" description="Protein kinase" evidence="3">
    <location>
        <begin position="304"/>
        <end position="583"/>
    </location>
</feature>
<feature type="active site" description="Proton acceptor" evidence="3">
    <location>
        <position position="427"/>
    </location>
</feature>
<feature type="binding site" evidence="3">
    <location>
        <begin position="310"/>
        <end position="318"/>
    </location>
    <ligand>
        <name>ATP</name>
        <dbReference type="ChEBI" id="CHEBI:30616"/>
    </ligand>
</feature>
<feature type="binding site" evidence="3">
    <location>
        <position position="332"/>
    </location>
    <ligand>
        <name>ATP</name>
        <dbReference type="ChEBI" id="CHEBI:30616"/>
    </ligand>
</feature>
<feature type="glycosylation site" description="N-linked (GlcNAc...) asparagine" evidence="4">
    <location>
        <position position="94"/>
    </location>
</feature>
<feature type="glycosylation site" description="N-linked (GlcNAc...) asparagine" evidence="4">
    <location>
        <position position="107"/>
    </location>
</feature>
<feature type="glycosylation site" description="N-linked (GlcNAc...) asparagine" evidence="4">
    <location>
        <position position="153"/>
    </location>
</feature>
<feature type="glycosylation site" description="N-linked (GlcNAc...) asparagine" evidence="4">
    <location>
        <position position="166"/>
    </location>
</feature>
<feature type="glycosylation site" description="N-linked (GlcNAc...) asparagine" evidence="4">
    <location>
        <position position="179"/>
    </location>
</feature>
<feature type="glycosylation site" description="N-linked (GlcNAc...) asparagine" evidence="4">
    <location>
        <position position="222"/>
    </location>
</feature>
<name>SERL2_ORYSJ</name>
<protein>
    <recommendedName>
        <fullName evidence="7">LRR receptor kinase SERL2</fullName>
        <ecNumber evidence="7">2.7.11.1</ecNumber>
    </recommendedName>
    <alternativeName>
        <fullName evidence="7">BRI1-associated receptor kinase 1 homolog 7</fullName>
        <shortName evidence="6">OsBAK1-7</shortName>
    </alternativeName>
    <alternativeName>
        <fullName evidence="7">Somatic embryogenesis receptor kinase-like 2</fullName>
        <shortName evidence="7">OsSERL2</shortName>
    </alternativeName>
</protein>
<evidence type="ECO:0000250" key="1">
    <source>
        <dbReference type="UniProtKB" id="Q7XV05"/>
    </source>
</evidence>
<evidence type="ECO:0000255" key="2"/>
<evidence type="ECO:0000255" key="3">
    <source>
        <dbReference type="PROSITE-ProRule" id="PRU00159"/>
    </source>
</evidence>
<evidence type="ECO:0000255" key="4">
    <source>
        <dbReference type="PROSITE-ProRule" id="PRU00498"/>
    </source>
</evidence>
<evidence type="ECO:0000269" key="5">
    <source>
    </source>
</evidence>
<evidence type="ECO:0000303" key="6">
    <source>
    </source>
</evidence>
<evidence type="ECO:0000305" key="7"/>
<evidence type="ECO:0000312" key="8">
    <source>
        <dbReference type="EMBL" id="BAB19337.1"/>
    </source>
</evidence>
<evidence type="ECO:0000312" key="9">
    <source>
        <dbReference type="EMBL" id="BAD69166.1"/>
    </source>
</evidence>
<evidence type="ECO:0000312" key="10">
    <source>
        <dbReference type="EMBL" id="BAF19290.1"/>
    </source>
</evidence>
<accession>Q9FP13</accession>
<gene>
    <name evidence="7" type="primary">SERL2</name>
    <name evidence="6" type="synonym">BAK1-7</name>
    <name evidence="10" type="ordered locus">Os06g0274500</name>
    <name evidence="7" type="ordered locus">LOC_Os06g16330</name>
    <name evidence="8" type="ORF">P0038C05.17</name>
    <name evidence="9" type="ORF">P0676F10.28</name>
</gene>
<proteinExistence type="evidence at protein level"/>
<comment type="function">
    <text evidence="1">LRR receptor kinase that may be involved in defense response.</text>
</comment>
<comment type="catalytic activity">
    <reaction evidence="7">
        <text>L-seryl-[protein] + ATP = O-phospho-L-seryl-[protein] + ADP + H(+)</text>
        <dbReference type="Rhea" id="RHEA:17989"/>
        <dbReference type="Rhea" id="RHEA-COMP:9863"/>
        <dbReference type="Rhea" id="RHEA-COMP:11604"/>
        <dbReference type="ChEBI" id="CHEBI:15378"/>
        <dbReference type="ChEBI" id="CHEBI:29999"/>
        <dbReference type="ChEBI" id="CHEBI:30616"/>
        <dbReference type="ChEBI" id="CHEBI:83421"/>
        <dbReference type="ChEBI" id="CHEBI:456216"/>
        <dbReference type="EC" id="2.7.11.1"/>
    </reaction>
</comment>
<comment type="catalytic activity">
    <reaction evidence="7">
        <text>L-threonyl-[protein] + ATP = O-phospho-L-threonyl-[protein] + ADP + H(+)</text>
        <dbReference type="Rhea" id="RHEA:46608"/>
        <dbReference type="Rhea" id="RHEA-COMP:11060"/>
        <dbReference type="Rhea" id="RHEA-COMP:11605"/>
        <dbReference type="ChEBI" id="CHEBI:15378"/>
        <dbReference type="ChEBI" id="CHEBI:30013"/>
        <dbReference type="ChEBI" id="CHEBI:30616"/>
        <dbReference type="ChEBI" id="CHEBI:61977"/>
        <dbReference type="ChEBI" id="CHEBI:456216"/>
        <dbReference type="EC" id="2.7.11.1"/>
    </reaction>
</comment>
<comment type="subunit">
    <text evidence="5">Interacts with MSBP1.</text>
</comment>
<comment type="subcellular location">
    <subcellularLocation>
        <location evidence="5">Cell membrane</location>
        <topology evidence="2">Single-pass membrane protein</topology>
    </subcellularLocation>
    <text evidence="5">Localizes in the plasma membrane.</text>
</comment>
<comment type="similarity">
    <text evidence="3">Belongs to the protein kinase superfamily. Ser/Thr protein kinase family.</text>
</comment>
<sequence length="640" mass="69309">MEPPFFLLLLLLVVSSSSPSAALLSAKGVNNEVQALIVIKNLLKDPHGVLKSWDQNSVDPCSWAMITCSPDFLVTGLEAPSQHLSGLLSPSIGNLTNLETVLLQNNNITGPIPAEIGRLENLKTLDLSSNSFYGEIPSSVGHLESLQYLRLNNNTLSGPFPSASANLSHLVFLDLSYNNLSGPIPESLARTYNIVGNPLICDANREQDCYGTAPMPMSYSLNGSRGGALPPAARDRGHKFAVAFGSTAGCMGLLLLAAGFLFWWRHRRNRQILFDVDEQQIENVNLGNVKRFSFRELQAATEGFSGKNILGKGGFGNVYRGQLPDGTLVAVKRLKDGNAAGGEAQFQTEVEMISLALHRNLLRLYGFCMTATERLLVYPFMSNGSVASRLKAKPALEWGTRRRIAVGAARGLVYLHEQCDPKIIHRDVKAANVLLDEACEAVVGDFGLAKLLDHRESHVTTAVRGTVGHIAPEYLSTGQSSDRTDVFGFGILLLELVTGQTALEFGKSSNHKGAMLDWVKKMQSEKKVEVLVDKGLGGGYDRVEVEEMVQVALLCTQYLPAHRPRMSDVVRMLEGDGLADRWEKASGHSTAAADSLSHSHRTSDPAPPAADFAAAFGRCFSDLTDDSSLLVQAVELSGPR</sequence>
<reference key="1">
    <citation type="journal article" date="2005" name="Nature">
        <title>The map-based sequence of the rice genome.</title>
        <authorList>
            <consortium name="International rice genome sequencing project (IRGSP)"/>
        </authorList>
    </citation>
    <scope>NUCLEOTIDE SEQUENCE [LARGE SCALE GENOMIC DNA]</scope>
    <source>
        <strain>cv. Nipponbare</strain>
    </source>
</reference>
<reference key="2">
    <citation type="journal article" date="2008" name="Nucleic Acids Res.">
        <title>The rice annotation project database (RAP-DB): 2008 update.</title>
        <authorList>
            <consortium name="The rice annotation project (RAP)"/>
        </authorList>
    </citation>
    <scope>GENOME REANNOTATION</scope>
    <source>
        <strain>cv. Nipponbare</strain>
    </source>
</reference>
<reference key="3">
    <citation type="journal article" date="2013" name="Rice">
        <title>Improvement of the Oryza sativa Nipponbare reference genome using next generation sequence and optical map data.</title>
        <authorList>
            <person name="Kawahara Y."/>
            <person name="de la Bastide M."/>
            <person name="Hamilton J.P."/>
            <person name="Kanamori H."/>
            <person name="McCombie W.R."/>
            <person name="Ouyang S."/>
            <person name="Schwartz D.C."/>
            <person name="Tanaka T."/>
            <person name="Wu J."/>
            <person name="Zhou S."/>
            <person name="Childs K.L."/>
            <person name="Davidson R.M."/>
            <person name="Lin H."/>
            <person name="Quesada-Ocampo L."/>
            <person name="Vaillancourt B."/>
            <person name="Sakai H."/>
            <person name="Lee S.S."/>
            <person name="Kim J."/>
            <person name="Numa H."/>
            <person name="Itoh T."/>
            <person name="Buell C.R."/>
            <person name="Matsumoto T."/>
        </authorList>
    </citation>
    <scope>GENOME REANNOTATION</scope>
    <source>
        <strain>cv. Nipponbare</strain>
    </source>
</reference>
<reference key="4">
    <citation type="journal article" date="2015" name="J. Exp. Bot.">
        <title>Differential expression of GS5 regulates grain size in rice.</title>
        <authorList>
            <person name="Xu C."/>
            <person name="Liu Y."/>
            <person name="Li Y."/>
            <person name="Xu X."/>
            <person name="Xu C."/>
            <person name="Li X."/>
            <person name="Xiao J."/>
            <person name="Zhang Q."/>
        </authorList>
    </citation>
    <scope>INTERACTION WITH MSBP1</scope>
    <scope>SUBCELLULAR LOCATION</scope>
</reference>
<keyword id="KW-0067">ATP-binding</keyword>
<keyword id="KW-1003">Cell membrane</keyword>
<keyword id="KW-0325">Glycoprotein</keyword>
<keyword id="KW-0418">Kinase</keyword>
<keyword id="KW-0433">Leucine-rich repeat</keyword>
<keyword id="KW-0472">Membrane</keyword>
<keyword id="KW-0547">Nucleotide-binding</keyword>
<keyword id="KW-0611">Plant defense</keyword>
<keyword id="KW-0675">Receptor</keyword>
<keyword id="KW-1185">Reference proteome</keyword>
<keyword id="KW-0677">Repeat</keyword>
<keyword id="KW-0723">Serine/threonine-protein kinase</keyword>
<keyword id="KW-0732">Signal</keyword>
<keyword id="KW-0808">Transferase</keyword>
<keyword id="KW-0812">Transmembrane</keyword>
<keyword id="KW-1133">Transmembrane helix</keyword>
<organism>
    <name type="scientific">Oryza sativa subsp. japonica</name>
    <name type="common">Rice</name>
    <dbReference type="NCBI Taxonomy" id="39947"/>
    <lineage>
        <taxon>Eukaryota</taxon>
        <taxon>Viridiplantae</taxon>
        <taxon>Streptophyta</taxon>
        <taxon>Embryophyta</taxon>
        <taxon>Tracheophyta</taxon>
        <taxon>Spermatophyta</taxon>
        <taxon>Magnoliopsida</taxon>
        <taxon>Liliopsida</taxon>
        <taxon>Poales</taxon>
        <taxon>Poaceae</taxon>
        <taxon>BOP clade</taxon>
        <taxon>Oryzoideae</taxon>
        <taxon>Oryzeae</taxon>
        <taxon>Oryzinae</taxon>
        <taxon>Oryza</taxon>
        <taxon>Oryza sativa</taxon>
    </lineage>
</organism>